<protein>
    <recommendedName>
        <fullName>Protein ROT1</fullName>
    </recommendedName>
</protein>
<proteinExistence type="inferred from homology"/>
<name>ROT1_AJECN</name>
<organism>
    <name type="scientific">Ajellomyces capsulatus (strain NAm1 / WU24)</name>
    <name type="common">Darling's disease fungus</name>
    <name type="synonym">Histoplasma capsulatum</name>
    <dbReference type="NCBI Taxonomy" id="2059318"/>
    <lineage>
        <taxon>Eukaryota</taxon>
        <taxon>Fungi</taxon>
        <taxon>Dikarya</taxon>
        <taxon>Ascomycota</taxon>
        <taxon>Pezizomycotina</taxon>
        <taxon>Eurotiomycetes</taxon>
        <taxon>Eurotiomycetidae</taxon>
        <taxon>Onygenales</taxon>
        <taxon>Ajellomycetaceae</taxon>
        <taxon>Histoplasma</taxon>
    </lineage>
</organism>
<evidence type="ECO:0000250" key="1"/>
<evidence type="ECO:0000255" key="2"/>
<evidence type="ECO:0000305" key="3"/>
<reference key="1">
    <citation type="journal article" date="2009" name="Genome Res.">
        <title>Comparative genomic analyses of the human fungal pathogens Coccidioides and their relatives.</title>
        <authorList>
            <person name="Sharpton T.J."/>
            <person name="Stajich J.E."/>
            <person name="Rounsley S.D."/>
            <person name="Gardner M.J."/>
            <person name="Wortman J.R."/>
            <person name="Jordar V.S."/>
            <person name="Maiti R."/>
            <person name="Kodira C.D."/>
            <person name="Neafsey D.E."/>
            <person name="Zeng Q."/>
            <person name="Hung C.-Y."/>
            <person name="McMahan C."/>
            <person name="Muszewska A."/>
            <person name="Grynberg M."/>
            <person name="Mandel M.A."/>
            <person name="Kellner E.M."/>
            <person name="Barker B.M."/>
            <person name="Galgiani J.N."/>
            <person name="Orbach M.J."/>
            <person name="Kirkland T.N."/>
            <person name="Cole G.T."/>
            <person name="Henn M.R."/>
            <person name="Birren B.W."/>
            <person name="Taylor J.W."/>
        </authorList>
    </citation>
    <scope>NUCLEOTIDE SEQUENCE [LARGE SCALE GENOMIC DNA]</scope>
    <source>
        <strain>NAm1 / WU24</strain>
    </source>
</reference>
<gene>
    <name type="primary">ROT1</name>
    <name type="ORF">HCAG_07139</name>
</gene>
<keyword id="KW-0256">Endoplasmic reticulum</keyword>
<keyword id="KW-0325">Glycoprotein</keyword>
<keyword id="KW-0472">Membrane</keyword>
<keyword id="KW-1185">Reference proteome</keyword>
<keyword id="KW-0732">Signal</keyword>
<keyword id="KW-0812">Transmembrane</keyword>
<keyword id="KW-1133">Transmembrane helix</keyword>
<accession>A6RBY1</accession>
<comment type="function">
    <text evidence="1">Required for normal levels of the cell wall 1,6-beta-glucan. Involved in a protein folding machinery chaperoning proteins acting in various physiological processes including cell wall synthesis and lysis of autophagic bodies (By similarity).</text>
</comment>
<comment type="subcellular location">
    <subcellularLocation>
        <location evidence="1">Endoplasmic reticulum membrane</location>
        <topology evidence="1">Single-pass type I membrane protein</topology>
    </subcellularLocation>
</comment>
<comment type="similarity">
    <text evidence="3">Belongs to the ROT1 family.</text>
</comment>
<sequence>METMMLAALPLLFLSSCFPAFVVAQGPADPRLTGTWTTKSMKVFTGSAFYDPIKDRLKEPLLTGISYSFTADGFYEEAYFRAISNPTRPECPSGIMQFQHGTYRVEPNGSMILTPFDSDGRQLISNRCAGKYAEYTRYTQKEVFQRYEILIDSYNRVERLNMFQFDGSPLNPMYLAFRQPQMHPTHTLNPTHTTKGAPRATAISERKVNAKRAKRSEEKAAEFGFAQSPLSKNSFVKRMNYYHSRMEKLSGTDKLWWVGLIMTSVGSLALIYR</sequence>
<feature type="signal peptide" evidence="2">
    <location>
        <begin position="1"/>
        <end position="24"/>
    </location>
</feature>
<feature type="chain" id="PRO_0000333401" description="Protein ROT1">
    <location>
        <begin position="25"/>
        <end position="273"/>
    </location>
</feature>
<feature type="topological domain" description="Lumenal" evidence="2">
    <location>
        <begin position="25"/>
        <end position="250"/>
    </location>
</feature>
<feature type="transmembrane region" description="Helical" evidence="2">
    <location>
        <begin position="251"/>
        <end position="271"/>
    </location>
</feature>
<feature type="glycosylation site" description="N-linked (GlcNAc...) asparagine" evidence="2">
    <location>
        <position position="108"/>
    </location>
</feature>
<dbReference type="EMBL" id="CH476662">
    <property type="protein sequence ID" value="EDN10678.1"/>
    <property type="molecule type" value="Genomic_DNA"/>
</dbReference>
<dbReference type="STRING" id="339724.A6RBY1"/>
<dbReference type="GlyCosmos" id="A6RBY1">
    <property type="glycosylation" value="1 site, No reported glycans"/>
</dbReference>
<dbReference type="KEGG" id="aje:HCAG_07139"/>
<dbReference type="VEuPathDB" id="FungiDB:HCAG_07139"/>
<dbReference type="HOGENOM" id="CLU_071622_0_0_1"/>
<dbReference type="OMA" id="YKPPQML"/>
<dbReference type="OrthoDB" id="3186at299071"/>
<dbReference type="Proteomes" id="UP000009297">
    <property type="component" value="Unassembled WGS sequence"/>
</dbReference>
<dbReference type="GO" id="GO:0005789">
    <property type="term" value="C:endoplasmic reticulum membrane"/>
    <property type="evidence" value="ECO:0007669"/>
    <property type="project" value="UniProtKB-SubCell"/>
</dbReference>
<dbReference type="GO" id="GO:0051082">
    <property type="term" value="F:unfolded protein binding"/>
    <property type="evidence" value="ECO:0007669"/>
    <property type="project" value="TreeGrafter"/>
</dbReference>
<dbReference type="GO" id="GO:0006458">
    <property type="term" value="P:'de novo' protein folding"/>
    <property type="evidence" value="ECO:0007669"/>
    <property type="project" value="InterPro"/>
</dbReference>
<dbReference type="InterPro" id="IPR019623">
    <property type="entry name" value="Rot1"/>
</dbReference>
<dbReference type="PANTHER" id="PTHR28090">
    <property type="entry name" value="PROTEIN ROT1"/>
    <property type="match status" value="1"/>
</dbReference>
<dbReference type="PANTHER" id="PTHR28090:SF1">
    <property type="entry name" value="PROTEIN ROT1"/>
    <property type="match status" value="1"/>
</dbReference>
<dbReference type="Pfam" id="PF10681">
    <property type="entry name" value="Rot1"/>
    <property type="match status" value="1"/>
</dbReference>
<dbReference type="PIRSF" id="PIRSF017290">
    <property type="entry name" value="ROT1_prd"/>
    <property type="match status" value="1"/>
</dbReference>